<organism>
    <name type="scientific">Sphingopyxis alaskensis (strain DSM 13593 / LMG 18877 / RB2256)</name>
    <name type="common">Sphingomonas alaskensis</name>
    <dbReference type="NCBI Taxonomy" id="317655"/>
    <lineage>
        <taxon>Bacteria</taxon>
        <taxon>Pseudomonadati</taxon>
        <taxon>Pseudomonadota</taxon>
        <taxon>Alphaproteobacteria</taxon>
        <taxon>Sphingomonadales</taxon>
        <taxon>Sphingomonadaceae</taxon>
        <taxon>Sphingopyxis</taxon>
    </lineage>
</organism>
<name>PYRG_SPHAL</name>
<protein>
    <recommendedName>
        <fullName evidence="1">CTP synthase</fullName>
        <ecNumber evidence="1">6.3.4.2</ecNumber>
    </recommendedName>
    <alternativeName>
        <fullName evidence="1">Cytidine 5'-triphosphate synthase</fullName>
    </alternativeName>
    <alternativeName>
        <fullName evidence="1">Cytidine triphosphate synthetase</fullName>
        <shortName evidence="1">CTP synthetase</shortName>
        <shortName evidence="1">CTPS</shortName>
    </alternativeName>
    <alternativeName>
        <fullName evidence="1">UTP--ammonia ligase</fullName>
    </alternativeName>
</protein>
<keyword id="KW-0067">ATP-binding</keyword>
<keyword id="KW-0315">Glutamine amidotransferase</keyword>
<keyword id="KW-0436">Ligase</keyword>
<keyword id="KW-0460">Magnesium</keyword>
<keyword id="KW-0479">Metal-binding</keyword>
<keyword id="KW-0547">Nucleotide-binding</keyword>
<keyword id="KW-0665">Pyrimidine biosynthesis</keyword>
<keyword id="KW-1185">Reference proteome</keyword>
<comment type="function">
    <text evidence="1">Catalyzes the ATP-dependent amination of UTP to CTP with either L-glutamine or ammonia as the source of nitrogen. Regulates intracellular CTP levels through interactions with the four ribonucleotide triphosphates.</text>
</comment>
<comment type="catalytic activity">
    <reaction evidence="1">
        <text>UTP + L-glutamine + ATP + H2O = CTP + L-glutamate + ADP + phosphate + 2 H(+)</text>
        <dbReference type="Rhea" id="RHEA:26426"/>
        <dbReference type="ChEBI" id="CHEBI:15377"/>
        <dbReference type="ChEBI" id="CHEBI:15378"/>
        <dbReference type="ChEBI" id="CHEBI:29985"/>
        <dbReference type="ChEBI" id="CHEBI:30616"/>
        <dbReference type="ChEBI" id="CHEBI:37563"/>
        <dbReference type="ChEBI" id="CHEBI:43474"/>
        <dbReference type="ChEBI" id="CHEBI:46398"/>
        <dbReference type="ChEBI" id="CHEBI:58359"/>
        <dbReference type="ChEBI" id="CHEBI:456216"/>
        <dbReference type="EC" id="6.3.4.2"/>
    </reaction>
</comment>
<comment type="catalytic activity">
    <reaction evidence="1">
        <text>L-glutamine + H2O = L-glutamate + NH4(+)</text>
        <dbReference type="Rhea" id="RHEA:15889"/>
        <dbReference type="ChEBI" id="CHEBI:15377"/>
        <dbReference type="ChEBI" id="CHEBI:28938"/>
        <dbReference type="ChEBI" id="CHEBI:29985"/>
        <dbReference type="ChEBI" id="CHEBI:58359"/>
    </reaction>
</comment>
<comment type="catalytic activity">
    <reaction evidence="1">
        <text>UTP + NH4(+) + ATP = CTP + ADP + phosphate + 2 H(+)</text>
        <dbReference type="Rhea" id="RHEA:16597"/>
        <dbReference type="ChEBI" id="CHEBI:15378"/>
        <dbReference type="ChEBI" id="CHEBI:28938"/>
        <dbReference type="ChEBI" id="CHEBI:30616"/>
        <dbReference type="ChEBI" id="CHEBI:37563"/>
        <dbReference type="ChEBI" id="CHEBI:43474"/>
        <dbReference type="ChEBI" id="CHEBI:46398"/>
        <dbReference type="ChEBI" id="CHEBI:456216"/>
    </reaction>
</comment>
<comment type="activity regulation">
    <text evidence="1">Allosterically activated by GTP, when glutamine is the substrate; GTP has no effect on the reaction when ammonia is the substrate. The allosteric effector GTP functions by stabilizing the protein conformation that binds the tetrahedral intermediate(s) formed during glutamine hydrolysis. Inhibited by the product CTP, via allosteric rather than competitive inhibition.</text>
</comment>
<comment type="pathway">
    <text evidence="1">Pyrimidine metabolism; CTP biosynthesis via de novo pathway; CTP from UDP: step 2/2.</text>
</comment>
<comment type="subunit">
    <text evidence="1">Homotetramer.</text>
</comment>
<comment type="miscellaneous">
    <text evidence="1">CTPSs have evolved a hybrid strategy for distinguishing between UTP and CTP. The overlapping regions of the product feedback inhibitory and substrate sites recognize a common feature in both compounds, the triphosphate moiety. To differentiate isosteric substrate and product pyrimidine rings, an additional pocket far from the expected kinase/ligase catalytic site, specifically recognizes the cytosine and ribose portions of the product inhibitor.</text>
</comment>
<comment type="similarity">
    <text evidence="1">Belongs to the CTP synthase family.</text>
</comment>
<gene>
    <name evidence="1" type="primary">pyrG</name>
    <name type="ordered locus">Sala_1170</name>
</gene>
<proteinExistence type="inferred from homology"/>
<reference key="1">
    <citation type="journal article" date="2009" name="Proc. Natl. Acad. Sci. U.S.A.">
        <title>The genomic basis of trophic strategy in marine bacteria.</title>
        <authorList>
            <person name="Lauro F.M."/>
            <person name="McDougald D."/>
            <person name="Thomas T."/>
            <person name="Williams T.J."/>
            <person name="Egan S."/>
            <person name="Rice S."/>
            <person name="DeMaere M.Z."/>
            <person name="Ting L."/>
            <person name="Ertan H."/>
            <person name="Johnson J."/>
            <person name="Ferriera S."/>
            <person name="Lapidus A."/>
            <person name="Anderson I."/>
            <person name="Kyrpides N."/>
            <person name="Munk A.C."/>
            <person name="Detter C."/>
            <person name="Han C.S."/>
            <person name="Brown M.V."/>
            <person name="Robb F.T."/>
            <person name="Kjelleberg S."/>
            <person name="Cavicchioli R."/>
        </authorList>
    </citation>
    <scope>NUCLEOTIDE SEQUENCE [LARGE SCALE GENOMIC DNA]</scope>
    <source>
        <strain>DSM 13593 / LMG 18877 / RB2256</strain>
    </source>
</reference>
<evidence type="ECO:0000255" key="1">
    <source>
        <dbReference type="HAMAP-Rule" id="MF_01227"/>
    </source>
</evidence>
<dbReference type="EC" id="6.3.4.2" evidence="1"/>
<dbReference type="EMBL" id="CP000356">
    <property type="protein sequence ID" value="ABF52886.1"/>
    <property type="molecule type" value="Genomic_DNA"/>
</dbReference>
<dbReference type="RefSeq" id="WP_011541471.1">
    <property type="nucleotide sequence ID" value="NC_008048.1"/>
</dbReference>
<dbReference type="SMR" id="Q1GTY6"/>
<dbReference type="STRING" id="317655.Sala_1170"/>
<dbReference type="MEROPS" id="C26.964"/>
<dbReference type="KEGG" id="sal:Sala_1170"/>
<dbReference type="eggNOG" id="COG0504">
    <property type="taxonomic scope" value="Bacteria"/>
</dbReference>
<dbReference type="HOGENOM" id="CLU_011675_5_0_5"/>
<dbReference type="OrthoDB" id="9801107at2"/>
<dbReference type="UniPathway" id="UPA00159">
    <property type="reaction ID" value="UER00277"/>
</dbReference>
<dbReference type="Proteomes" id="UP000006578">
    <property type="component" value="Chromosome"/>
</dbReference>
<dbReference type="GO" id="GO:0005829">
    <property type="term" value="C:cytosol"/>
    <property type="evidence" value="ECO:0007669"/>
    <property type="project" value="TreeGrafter"/>
</dbReference>
<dbReference type="GO" id="GO:0005524">
    <property type="term" value="F:ATP binding"/>
    <property type="evidence" value="ECO:0007669"/>
    <property type="project" value="UniProtKB-KW"/>
</dbReference>
<dbReference type="GO" id="GO:0003883">
    <property type="term" value="F:CTP synthase activity"/>
    <property type="evidence" value="ECO:0007669"/>
    <property type="project" value="UniProtKB-UniRule"/>
</dbReference>
<dbReference type="GO" id="GO:0004359">
    <property type="term" value="F:glutaminase activity"/>
    <property type="evidence" value="ECO:0007669"/>
    <property type="project" value="RHEA"/>
</dbReference>
<dbReference type="GO" id="GO:0042802">
    <property type="term" value="F:identical protein binding"/>
    <property type="evidence" value="ECO:0007669"/>
    <property type="project" value="TreeGrafter"/>
</dbReference>
<dbReference type="GO" id="GO:0046872">
    <property type="term" value="F:metal ion binding"/>
    <property type="evidence" value="ECO:0007669"/>
    <property type="project" value="UniProtKB-KW"/>
</dbReference>
<dbReference type="GO" id="GO:0044210">
    <property type="term" value="P:'de novo' CTP biosynthetic process"/>
    <property type="evidence" value="ECO:0007669"/>
    <property type="project" value="UniProtKB-UniRule"/>
</dbReference>
<dbReference type="GO" id="GO:0019856">
    <property type="term" value="P:pyrimidine nucleobase biosynthetic process"/>
    <property type="evidence" value="ECO:0007669"/>
    <property type="project" value="TreeGrafter"/>
</dbReference>
<dbReference type="CDD" id="cd03113">
    <property type="entry name" value="CTPS_N"/>
    <property type="match status" value="1"/>
</dbReference>
<dbReference type="CDD" id="cd01746">
    <property type="entry name" value="GATase1_CTP_Synthase"/>
    <property type="match status" value="1"/>
</dbReference>
<dbReference type="FunFam" id="3.40.50.300:FF:000009">
    <property type="entry name" value="CTP synthase"/>
    <property type="match status" value="1"/>
</dbReference>
<dbReference type="FunFam" id="3.40.50.880:FF:000002">
    <property type="entry name" value="CTP synthase"/>
    <property type="match status" value="1"/>
</dbReference>
<dbReference type="Gene3D" id="3.40.50.880">
    <property type="match status" value="1"/>
</dbReference>
<dbReference type="Gene3D" id="3.40.50.300">
    <property type="entry name" value="P-loop containing nucleotide triphosphate hydrolases"/>
    <property type="match status" value="1"/>
</dbReference>
<dbReference type="HAMAP" id="MF_01227">
    <property type="entry name" value="PyrG"/>
    <property type="match status" value="1"/>
</dbReference>
<dbReference type="InterPro" id="IPR029062">
    <property type="entry name" value="Class_I_gatase-like"/>
</dbReference>
<dbReference type="InterPro" id="IPR004468">
    <property type="entry name" value="CTP_synthase"/>
</dbReference>
<dbReference type="InterPro" id="IPR017456">
    <property type="entry name" value="CTP_synthase_N"/>
</dbReference>
<dbReference type="InterPro" id="IPR017926">
    <property type="entry name" value="GATASE"/>
</dbReference>
<dbReference type="InterPro" id="IPR033828">
    <property type="entry name" value="GATase1_CTP_Synthase"/>
</dbReference>
<dbReference type="InterPro" id="IPR027417">
    <property type="entry name" value="P-loop_NTPase"/>
</dbReference>
<dbReference type="NCBIfam" id="NF003792">
    <property type="entry name" value="PRK05380.1"/>
    <property type="match status" value="1"/>
</dbReference>
<dbReference type="NCBIfam" id="TIGR00337">
    <property type="entry name" value="PyrG"/>
    <property type="match status" value="1"/>
</dbReference>
<dbReference type="PANTHER" id="PTHR11550">
    <property type="entry name" value="CTP SYNTHASE"/>
    <property type="match status" value="1"/>
</dbReference>
<dbReference type="PANTHER" id="PTHR11550:SF0">
    <property type="entry name" value="CTP SYNTHASE-RELATED"/>
    <property type="match status" value="1"/>
</dbReference>
<dbReference type="Pfam" id="PF06418">
    <property type="entry name" value="CTP_synth_N"/>
    <property type="match status" value="1"/>
</dbReference>
<dbReference type="Pfam" id="PF00117">
    <property type="entry name" value="GATase"/>
    <property type="match status" value="1"/>
</dbReference>
<dbReference type="SUPFAM" id="SSF52317">
    <property type="entry name" value="Class I glutamine amidotransferase-like"/>
    <property type="match status" value="1"/>
</dbReference>
<dbReference type="SUPFAM" id="SSF52540">
    <property type="entry name" value="P-loop containing nucleoside triphosphate hydrolases"/>
    <property type="match status" value="1"/>
</dbReference>
<dbReference type="PROSITE" id="PS51273">
    <property type="entry name" value="GATASE_TYPE_1"/>
    <property type="match status" value="1"/>
</dbReference>
<feature type="chain" id="PRO_0000266223" description="CTP synthase">
    <location>
        <begin position="1"/>
        <end position="543"/>
    </location>
</feature>
<feature type="domain" description="Glutamine amidotransferase type-1" evidence="1">
    <location>
        <begin position="291"/>
        <end position="542"/>
    </location>
</feature>
<feature type="region of interest" description="Amidoligase domain" evidence="1">
    <location>
        <begin position="1"/>
        <end position="265"/>
    </location>
</feature>
<feature type="active site" description="Nucleophile; for glutamine hydrolysis" evidence="1">
    <location>
        <position position="381"/>
    </location>
</feature>
<feature type="active site" evidence="1">
    <location>
        <position position="515"/>
    </location>
</feature>
<feature type="active site" evidence="1">
    <location>
        <position position="517"/>
    </location>
</feature>
<feature type="binding site" evidence="1">
    <location>
        <position position="13"/>
    </location>
    <ligand>
        <name>CTP</name>
        <dbReference type="ChEBI" id="CHEBI:37563"/>
        <note>allosteric inhibitor</note>
    </ligand>
</feature>
<feature type="binding site" evidence="1">
    <location>
        <position position="13"/>
    </location>
    <ligand>
        <name>UTP</name>
        <dbReference type="ChEBI" id="CHEBI:46398"/>
    </ligand>
</feature>
<feature type="binding site" evidence="1">
    <location>
        <begin position="14"/>
        <end position="19"/>
    </location>
    <ligand>
        <name>ATP</name>
        <dbReference type="ChEBI" id="CHEBI:30616"/>
    </ligand>
</feature>
<feature type="binding site" evidence="1">
    <location>
        <position position="54"/>
    </location>
    <ligand>
        <name>L-glutamine</name>
        <dbReference type="ChEBI" id="CHEBI:58359"/>
    </ligand>
</feature>
<feature type="binding site" evidence="1">
    <location>
        <position position="71"/>
    </location>
    <ligand>
        <name>ATP</name>
        <dbReference type="ChEBI" id="CHEBI:30616"/>
    </ligand>
</feature>
<feature type="binding site" evidence="1">
    <location>
        <position position="71"/>
    </location>
    <ligand>
        <name>Mg(2+)</name>
        <dbReference type="ChEBI" id="CHEBI:18420"/>
    </ligand>
</feature>
<feature type="binding site" evidence="1">
    <location>
        <position position="139"/>
    </location>
    <ligand>
        <name>Mg(2+)</name>
        <dbReference type="ChEBI" id="CHEBI:18420"/>
    </ligand>
</feature>
<feature type="binding site" evidence="1">
    <location>
        <begin position="146"/>
        <end position="148"/>
    </location>
    <ligand>
        <name>CTP</name>
        <dbReference type="ChEBI" id="CHEBI:37563"/>
        <note>allosteric inhibitor</note>
    </ligand>
</feature>
<feature type="binding site" evidence="1">
    <location>
        <begin position="186"/>
        <end position="191"/>
    </location>
    <ligand>
        <name>CTP</name>
        <dbReference type="ChEBI" id="CHEBI:37563"/>
        <note>allosteric inhibitor</note>
    </ligand>
</feature>
<feature type="binding site" evidence="1">
    <location>
        <begin position="186"/>
        <end position="191"/>
    </location>
    <ligand>
        <name>UTP</name>
        <dbReference type="ChEBI" id="CHEBI:46398"/>
    </ligand>
</feature>
<feature type="binding site" evidence="1">
    <location>
        <position position="222"/>
    </location>
    <ligand>
        <name>CTP</name>
        <dbReference type="ChEBI" id="CHEBI:37563"/>
        <note>allosteric inhibitor</note>
    </ligand>
</feature>
<feature type="binding site" evidence="1">
    <location>
        <position position="222"/>
    </location>
    <ligand>
        <name>UTP</name>
        <dbReference type="ChEBI" id="CHEBI:46398"/>
    </ligand>
</feature>
<feature type="binding site" evidence="1">
    <location>
        <position position="354"/>
    </location>
    <ligand>
        <name>L-glutamine</name>
        <dbReference type="ChEBI" id="CHEBI:58359"/>
    </ligand>
</feature>
<feature type="binding site" evidence="1">
    <location>
        <begin position="382"/>
        <end position="385"/>
    </location>
    <ligand>
        <name>L-glutamine</name>
        <dbReference type="ChEBI" id="CHEBI:58359"/>
    </ligand>
</feature>
<feature type="binding site" evidence="1">
    <location>
        <position position="405"/>
    </location>
    <ligand>
        <name>L-glutamine</name>
        <dbReference type="ChEBI" id="CHEBI:58359"/>
    </ligand>
</feature>
<feature type="binding site" evidence="1">
    <location>
        <position position="470"/>
    </location>
    <ligand>
        <name>L-glutamine</name>
        <dbReference type="ChEBI" id="CHEBI:58359"/>
    </ligand>
</feature>
<accession>Q1GTY6</accession>
<sequence length="543" mass="59457">MARFIFITGGVVSSLGKGLMAASLAALLQARGYRVRIRKFDPYLNVDPGTMSPYQHGEVYVTDDGAETDLDLGHYERFTGVAARQSDNVTSGRIYQGIIAKERRGDYLGATVQVVPHVTDAIKDFARAETDDLDFVLCEIGGTVGDIESLPFIEAIRQLKNEVGRDNAISVHVTLVPYIAAAGELKTKPTQHSVRELASLGVQPDILLCRCEKPLPDSERAKIALFCNVRKEAVIPALDADSIYSVPVQYHGEGLDSEVLRAFGILDAPAPDLTAWYDIMDRKQHPEGEVTIGVVGKYVSLPDAYKSLNEALVHGGMAHRVKVNIRWLDAEMFERDEDLVANLEPLHGILVPGGFGERGSEGKIASVRFARERNVPFFGICLGMQMACIEAARNTSGIANASSTEFGPTDEPVVGLITEWMSAEGLQKRGANTDLGGTMRLGAYDAKLSPNSHVASVYGTNEISERHRHRYEVNGAYRERLEKGGLVFSGMSPDGMLPEIVERPDHPWFIGVQFHPELKSKPFDPHPLFAGFIEAAVKQSRLV</sequence>